<evidence type="ECO:0000255" key="1">
    <source>
        <dbReference type="HAMAP-Rule" id="MF_00747"/>
    </source>
</evidence>
<organism>
    <name type="scientific">Yersinia pestis bv. Antiqua (strain Angola)</name>
    <dbReference type="NCBI Taxonomy" id="349746"/>
    <lineage>
        <taxon>Bacteria</taxon>
        <taxon>Pseudomonadati</taxon>
        <taxon>Pseudomonadota</taxon>
        <taxon>Gammaproteobacteria</taxon>
        <taxon>Enterobacterales</taxon>
        <taxon>Yersiniaceae</taxon>
        <taxon>Yersinia</taxon>
    </lineage>
</organism>
<gene>
    <name evidence="1" type="primary">aceK</name>
    <name type="ordered locus">YpAngola_A3925</name>
</gene>
<feature type="chain" id="PRO_1000133286" description="Isocitrate dehydrogenase kinase/phosphatase">
    <location>
        <begin position="1"/>
        <end position="575"/>
    </location>
</feature>
<feature type="active site" evidence="1">
    <location>
        <position position="371"/>
    </location>
</feature>
<feature type="binding site" evidence="1">
    <location>
        <begin position="315"/>
        <end position="321"/>
    </location>
    <ligand>
        <name>ATP</name>
        <dbReference type="ChEBI" id="CHEBI:30616"/>
    </ligand>
</feature>
<feature type="binding site" evidence="1">
    <location>
        <position position="336"/>
    </location>
    <ligand>
        <name>ATP</name>
        <dbReference type="ChEBI" id="CHEBI:30616"/>
    </ligand>
</feature>
<keyword id="KW-0067">ATP-binding</keyword>
<keyword id="KW-0963">Cytoplasm</keyword>
<keyword id="KW-0329">Glyoxylate bypass</keyword>
<keyword id="KW-0378">Hydrolase</keyword>
<keyword id="KW-0418">Kinase</keyword>
<keyword id="KW-0547">Nucleotide-binding</keyword>
<keyword id="KW-0904">Protein phosphatase</keyword>
<keyword id="KW-0723">Serine/threonine-protein kinase</keyword>
<keyword id="KW-0808">Transferase</keyword>
<keyword id="KW-0816">Tricarboxylic acid cycle</keyword>
<dbReference type="EC" id="2.7.11.5" evidence="1"/>
<dbReference type="EC" id="3.1.3.-" evidence="1"/>
<dbReference type="EMBL" id="CP000901">
    <property type="protein sequence ID" value="ABX88128.1"/>
    <property type="molecule type" value="Genomic_DNA"/>
</dbReference>
<dbReference type="RefSeq" id="WP_002212079.1">
    <property type="nucleotide sequence ID" value="NZ_CP009935.1"/>
</dbReference>
<dbReference type="SMR" id="A9R541"/>
<dbReference type="GeneID" id="57974998"/>
<dbReference type="KEGG" id="ypg:YpAngola_A3925"/>
<dbReference type="PATRIC" id="fig|349746.12.peg.645"/>
<dbReference type="GO" id="GO:0005737">
    <property type="term" value="C:cytoplasm"/>
    <property type="evidence" value="ECO:0007669"/>
    <property type="project" value="UniProtKB-SubCell"/>
</dbReference>
<dbReference type="GO" id="GO:0008772">
    <property type="term" value="F:[isocitrate dehydrogenase (NADP+)] kinase activity"/>
    <property type="evidence" value="ECO:0007669"/>
    <property type="project" value="UniProtKB-UniRule"/>
</dbReference>
<dbReference type="GO" id="GO:0016208">
    <property type="term" value="F:AMP binding"/>
    <property type="evidence" value="ECO:0007669"/>
    <property type="project" value="TreeGrafter"/>
</dbReference>
<dbReference type="GO" id="GO:0005524">
    <property type="term" value="F:ATP binding"/>
    <property type="evidence" value="ECO:0007669"/>
    <property type="project" value="UniProtKB-UniRule"/>
</dbReference>
<dbReference type="GO" id="GO:0004721">
    <property type="term" value="F:phosphoprotein phosphatase activity"/>
    <property type="evidence" value="ECO:0007669"/>
    <property type="project" value="UniProtKB-KW"/>
</dbReference>
<dbReference type="GO" id="GO:0004674">
    <property type="term" value="F:protein serine/threonine kinase activity"/>
    <property type="evidence" value="ECO:0007669"/>
    <property type="project" value="UniProtKB-KW"/>
</dbReference>
<dbReference type="GO" id="GO:0006006">
    <property type="term" value="P:glucose metabolic process"/>
    <property type="evidence" value="ECO:0007669"/>
    <property type="project" value="InterPro"/>
</dbReference>
<dbReference type="GO" id="GO:0006097">
    <property type="term" value="P:glyoxylate cycle"/>
    <property type="evidence" value="ECO:0007669"/>
    <property type="project" value="UniProtKB-UniRule"/>
</dbReference>
<dbReference type="GO" id="GO:0006099">
    <property type="term" value="P:tricarboxylic acid cycle"/>
    <property type="evidence" value="ECO:0007669"/>
    <property type="project" value="UniProtKB-UniRule"/>
</dbReference>
<dbReference type="HAMAP" id="MF_00747">
    <property type="entry name" value="AceK"/>
    <property type="match status" value="1"/>
</dbReference>
<dbReference type="InterPro" id="IPR046855">
    <property type="entry name" value="AceK_kinase"/>
</dbReference>
<dbReference type="InterPro" id="IPR046854">
    <property type="entry name" value="AceK_regulatory"/>
</dbReference>
<dbReference type="InterPro" id="IPR010452">
    <property type="entry name" value="Isocitrate_DH_AceK"/>
</dbReference>
<dbReference type="NCBIfam" id="NF002804">
    <property type="entry name" value="PRK02946.1"/>
    <property type="match status" value="1"/>
</dbReference>
<dbReference type="PANTHER" id="PTHR39559">
    <property type="match status" value="1"/>
</dbReference>
<dbReference type="PANTHER" id="PTHR39559:SF1">
    <property type="entry name" value="ISOCITRATE DEHYDROGENASE KINASE_PHOSPHATASE"/>
    <property type="match status" value="1"/>
</dbReference>
<dbReference type="Pfam" id="PF06315">
    <property type="entry name" value="AceK_kinase"/>
    <property type="match status" value="1"/>
</dbReference>
<dbReference type="Pfam" id="PF20423">
    <property type="entry name" value="AceK_regulatory"/>
    <property type="match status" value="1"/>
</dbReference>
<dbReference type="PIRSF" id="PIRSF000719">
    <property type="entry name" value="AceK"/>
    <property type="match status" value="1"/>
</dbReference>
<accession>A9R541</accession>
<comment type="function">
    <text evidence="1">Bifunctional enzyme which can phosphorylate or dephosphorylate isocitrate dehydrogenase (IDH) on a specific serine residue. This is a regulatory mechanism which enables bacteria to bypass the Krebs cycle via the glyoxylate shunt in response to the source of carbon. When bacteria are grown on glucose, IDH is fully active and unphosphorylated, but when grown on acetate or ethanol, the activity of IDH declines drastically concomitant with its phosphorylation.</text>
</comment>
<comment type="catalytic activity">
    <reaction evidence="1">
        <text>L-seryl-[isocitrate dehydrogenase] + ATP = O-phospho-L-seryl-[isocitrate dehydrogenase] + ADP + H(+)</text>
        <dbReference type="Rhea" id="RHEA:43540"/>
        <dbReference type="Rhea" id="RHEA-COMP:10605"/>
        <dbReference type="Rhea" id="RHEA-COMP:10606"/>
        <dbReference type="ChEBI" id="CHEBI:15378"/>
        <dbReference type="ChEBI" id="CHEBI:29999"/>
        <dbReference type="ChEBI" id="CHEBI:30616"/>
        <dbReference type="ChEBI" id="CHEBI:83421"/>
        <dbReference type="ChEBI" id="CHEBI:456216"/>
        <dbReference type="EC" id="2.7.11.5"/>
    </reaction>
</comment>
<comment type="subcellular location">
    <subcellularLocation>
        <location evidence="1">Cytoplasm</location>
    </subcellularLocation>
</comment>
<comment type="similarity">
    <text evidence="1">Belongs to the AceK family.</text>
</comment>
<reference key="1">
    <citation type="journal article" date="2010" name="J. Bacteriol.">
        <title>Genome sequence of the deep-rooted Yersinia pestis strain Angola reveals new insights into the evolution and pangenome of the plague bacterium.</title>
        <authorList>
            <person name="Eppinger M."/>
            <person name="Worsham P.L."/>
            <person name="Nikolich M.P."/>
            <person name="Riley D.R."/>
            <person name="Sebastian Y."/>
            <person name="Mou S."/>
            <person name="Achtman M."/>
            <person name="Lindler L.E."/>
            <person name="Ravel J."/>
        </authorList>
    </citation>
    <scope>NUCLEOTIDE SEQUENCE [LARGE SCALE GENOMIC DNA]</scope>
    <source>
        <strain>Angola</strain>
    </source>
</reference>
<sequence>MVAKLEQLIAQTILQGFDAQYGRFLEVTAGAQHRFEQADWHAVQQAMKKRIHLYDHHVGLVVEQLKYITDQRHFDVEFLARVKEIYTGLLPDYPRFEIAESFFNSVYCRLFKHRDLTPDKLFVFSSQPERRFREIPRPLARDFIPKGDLSGMLQMVLNDLSLRLHWENLSRDIDYIVMAIRQAFTDEQLASAHFQIANELFYRNKAAWLVGKLRLNGDIYPFLLPIHHNESGELFIDTCLTSKAEASIVFGFARSYFMVYVPLPAAMVEWLREILPGKSTAELYTAIGCQKHGKTESYREYLAFIHQSSEQFIIAPGVKGMVMLVFTLPSFDRVFKVIKDQFAPQKEVTQARVLECYQLVKEHDRVGRMADTQEYENFVIDKHRISPELLAELQHEVPEKLEDLGDKIVIKHLYMERRMTPLNLYMEQADDQQLKDAIEEYGNAIKQLAAANIFPGDMLFKNFGVTRHGRVVFYDYDEICYMTEVNFRDIPPPRYPEDEMASEPWYSVSPNDVFPEEFRHFLCSDRKVRHFFEEMHGDLFQASYWRGLQQRIRDGHVEDVFAYRRKQRFSQRALN</sequence>
<protein>
    <recommendedName>
        <fullName evidence="1">Isocitrate dehydrogenase kinase/phosphatase</fullName>
        <shortName evidence="1">IDH kinase/phosphatase</shortName>
        <shortName evidence="1">IDHK/P</shortName>
        <ecNumber evidence="1">2.7.11.5</ecNumber>
        <ecNumber evidence="1">3.1.3.-</ecNumber>
    </recommendedName>
</protein>
<name>ACEK_YERPG</name>
<proteinExistence type="inferred from homology"/>